<protein>
    <recommendedName>
        <fullName>Outer membrane porin C</fullName>
    </recommendedName>
    <alternativeName>
        <fullName>Outer membrane protein 1B</fullName>
    </alternativeName>
    <alternativeName>
        <fullName>Outer membrane protein C</fullName>
    </alternativeName>
    <alternativeName>
        <fullName>Porin OmpC</fullName>
    </alternativeName>
</protein>
<comment type="function">
    <text evidence="1">Forms pores that allow passive diffusion of small molecules across the outer membrane.</text>
</comment>
<comment type="subunit">
    <text evidence="1">Homotrimer.</text>
</comment>
<comment type="subcellular location">
    <subcellularLocation>
        <location>Cell outer membrane</location>
        <topology>Multi-pass membrane protein</topology>
    </subcellularLocation>
</comment>
<comment type="similarity">
    <text evidence="2">Belongs to the Gram-negative porin family.</text>
</comment>
<gene>
    <name type="primary">ompC</name>
    <name type="ordered locus">Z3473</name>
    <name type="ordered locus">ECs3104</name>
</gene>
<evidence type="ECO:0000250" key="1"/>
<evidence type="ECO:0000305" key="2"/>
<sequence length="367" mass="40508">MKVKVLSLLVPALLVAGAANAAEVYNKDGNKLDLYGKVDGLHYFSDDKSVDGDQTYMRLGFKGETQVTDQLTGYGQWEYQIQGNSAENENNSWTRVAFAGLKFQDVGSFDYGRNYGVVYDVTSWTDVLPEFGGDTYGSDNFMQQRGNGFATYRNTDFFGLVDGLNFAVQYQGKNGSVSGEGMTNNGREALRQNGDGVGGSITYDYEGFGIGAAVSSSKRTDDQNSPLYIGNGDRAETYTGGLKYDANNIYLAAQYTQTYNATRVGSLGWANKAQNFEAVAQYQFDFGLRPSLAYLQSKGKNLGVINGRNYDDEDILKYVDVGATYYFNKNMSTYVDYKINLLDDNQFTRDAGINTDNIVALGLVYQF</sequence>
<name>OMPC_ECO57</name>
<reference key="1">
    <citation type="journal article" date="2001" name="Nature">
        <title>Genome sequence of enterohaemorrhagic Escherichia coli O157:H7.</title>
        <authorList>
            <person name="Perna N.T."/>
            <person name="Plunkett G. III"/>
            <person name="Burland V."/>
            <person name="Mau B."/>
            <person name="Glasner J.D."/>
            <person name="Rose D.J."/>
            <person name="Mayhew G.F."/>
            <person name="Evans P.S."/>
            <person name="Gregor J."/>
            <person name="Kirkpatrick H.A."/>
            <person name="Posfai G."/>
            <person name="Hackett J."/>
            <person name="Klink S."/>
            <person name="Boutin A."/>
            <person name="Shao Y."/>
            <person name="Miller L."/>
            <person name="Grotbeck E.J."/>
            <person name="Davis N.W."/>
            <person name="Lim A."/>
            <person name="Dimalanta E.T."/>
            <person name="Potamousis K."/>
            <person name="Apodaca J."/>
            <person name="Anantharaman T.S."/>
            <person name="Lin J."/>
            <person name="Yen G."/>
            <person name="Schwartz D.C."/>
            <person name="Welch R.A."/>
            <person name="Blattner F.R."/>
        </authorList>
    </citation>
    <scope>NUCLEOTIDE SEQUENCE [LARGE SCALE GENOMIC DNA]</scope>
    <source>
        <strain>O157:H7 / EDL933 / ATCC 700927 / EHEC</strain>
    </source>
</reference>
<reference key="2">
    <citation type="journal article" date="2001" name="DNA Res.">
        <title>Complete genome sequence of enterohemorrhagic Escherichia coli O157:H7 and genomic comparison with a laboratory strain K-12.</title>
        <authorList>
            <person name="Hayashi T."/>
            <person name="Makino K."/>
            <person name="Ohnishi M."/>
            <person name="Kurokawa K."/>
            <person name="Ishii K."/>
            <person name="Yokoyama K."/>
            <person name="Han C.-G."/>
            <person name="Ohtsubo E."/>
            <person name="Nakayama K."/>
            <person name="Murata T."/>
            <person name="Tanaka M."/>
            <person name="Tobe T."/>
            <person name="Iida T."/>
            <person name="Takami H."/>
            <person name="Honda T."/>
            <person name="Sasakawa C."/>
            <person name="Ogasawara N."/>
            <person name="Yasunaga T."/>
            <person name="Kuhara S."/>
            <person name="Shiba T."/>
            <person name="Hattori M."/>
            <person name="Shinagawa H."/>
        </authorList>
    </citation>
    <scope>NUCLEOTIDE SEQUENCE [LARGE SCALE GENOMIC DNA]</scope>
    <source>
        <strain>O157:H7 / Sakai / RIMD 0509952 / EHEC</strain>
    </source>
</reference>
<proteinExistence type="inferred from homology"/>
<feature type="signal peptide" evidence="1">
    <location>
        <begin position="1"/>
        <end position="21"/>
    </location>
</feature>
<feature type="chain" id="PRO_0000025232" description="Outer membrane porin C">
    <location>
        <begin position="22"/>
        <end position="367"/>
    </location>
</feature>
<dbReference type="EMBL" id="AE005174">
    <property type="protein sequence ID" value="AAG57350.1"/>
    <property type="molecule type" value="Genomic_DNA"/>
</dbReference>
<dbReference type="EMBL" id="BA000007">
    <property type="protein sequence ID" value="BAB36527.1"/>
    <property type="molecule type" value="Genomic_DNA"/>
</dbReference>
<dbReference type="PIR" id="B85861">
    <property type="entry name" value="B85861"/>
</dbReference>
<dbReference type="PIR" id="H91016">
    <property type="entry name" value="H91016"/>
</dbReference>
<dbReference type="RefSeq" id="NP_311131.1">
    <property type="nucleotide sequence ID" value="NC_002695.1"/>
</dbReference>
<dbReference type="RefSeq" id="WP_000865552.1">
    <property type="nucleotide sequence ID" value="NZ_VOAI01000001.1"/>
</dbReference>
<dbReference type="SMR" id="Q8XE41"/>
<dbReference type="IntAct" id="Q8XE41">
    <property type="interactions" value="1"/>
</dbReference>
<dbReference type="STRING" id="155864.Z3473"/>
<dbReference type="GeneID" id="916811"/>
<dbReference type="KEGG" id="ece:Z3473"/>
<dbReference type="KEGG" id="ecs:ECs_3104"/>
<dbReference type="PATRIC" id="fig|386585.9.peg.3238"/>
<dbReference type="eggNOG" id="COG3203">
    <property type="taxonomic scope" value="Bacteria"/>
</dbReference>
<dbReference type="HOGENOM" id="CLU_058202_0_0_6"/>
<dbReference type="OMA" id="AMYTQSY"/>
<dbReference type="Proteomes" id="UP000000558">
    <property type="component" value="Chromosome"/>
</dbReference>
<dbReference type="Proteomes" id="UP000002519">
    <property type="component" value="Chromosome"/>
</dbReference>
<dbReference type="GO" id="GO:0009279">
    <property type="term" value="C:cell outer membrane"/>
    <property type="evidence" value="ECO:0007669"/>
    <property type="project" value="UniProtKB-SubCell"/>
</dbReference>
<dbReference type="GO" id="GO:0046930">
    <property type="term" value="C:pore complex"/>
    <property type="evidence" value="ECO:0007669"/>
    <property type="project" value="UniProtKB-KW"/>
</dbReference>
<dbReference type="GO" id="GO:0015288">
    <property type="term" value="F:porin activity"/>
    <property type="evidence" value="ECO:0007669"/>
    <property type="project" value="UniProtKB-KW"/>
</dbReference>
<dbReference type="GO" id="GO:0034220">
    <property type="term" value="P:monoatomic ion transmembrane transport"/>
    <property type="evidence" value="ECO:0007669"/>
    <property type="project" value="InterPro"/>
</dbReference>
<dbReference type="FunFam" id="2.40.160.10:FF:000002">
    <property type="entry name" value="Outer membrane porin F"/>
    <property type="match status" value="1"/>
</dbReference>
<dbReference type="Gene3D" id="2.40.160.10">
    <property type="entry name" value="Porin"/>
    <property type="match status" value="1"/>
</dbReference>
<dbReference type="InterPro" id="IPR050298">
    <property type="entry name" value="Gram-neg_bact_OMP"/>
</dbReference>
<dbReference type="InterPro" id="IPR023614">
    <property type="entry name" value="Porin_dom_sf"/>
</dbReference>
<dbReference type="InterPro" id="IPR001897">
    <property type="entry name" value="Porin_gammaproteobac"/>
</dbReference>
<dbReference type="InterPro" id="IPR001702">
    <property type="entry name" value="Porin_Gram-ve"/>
</dbReference>
<dbReference type="InterPro" id="IPR013793">
    <property type="entry name" value="Porin_Gram-ve_CS"/>
</dbReference>
<dbReference type="NCBIfam" id="NF007841">
    <property type="entry name" value="PRK10554.1"/>
    <property type="match status" value="1"/>
</dbReference>
<dbReference type="PANTHER" id="PTHR34501:SF1">
    <property type="entry name" value="OUTER MEMBRANE PORIN C"/>
    <property type="match status" value="1"/>
</dbReference>
<dbReference type="PANTHER" id="PTHR34501">
    <property type="entry name" value="PROTEIN YDDL-RELATED"/>
    <property type="match status" value="1"/>
</dbReference>
<dbReference type="Pfam" id="PF00267">
    <property type="entry name" value="Porin_1"/>
    <property type="match status" value="1"/>
</dbReference>
<dbReference type="PRINTS" id="PR00183">
    <property type="entry name" value="ECOLIPORIN"/>
</dbReference>
<dbReference type="PRINTS" id="PR00182">
    <property type="entry name" value="ECOLNEIPORIN"/>
</dbReference>
<dbReference type="SUPFAM" id="SSF56935">
    <property type="entry name" value="Porins"/>
    <property type="match status" value="1"/>
</dbReference>
<dbReference type="PROSITE" id="PS00576">
    <property type="entry name" value="GRAM_NEG_PORIN"/>
    <property type="match status" value="1"/>
</dbReference>
<organism>
    <name type="scientific">Escherichia coli O157:H7</name>
    <dbReference type="NCBI Taxonomy" id="83334"/>
    <lineage>
        <taxon>Bacteria</taxon>
        <taxon>Pseudomonadati</taxon>
        <taxon>Pseudomonadota</taxon>
        <taxon>Gammaproteobacteria</taxon>
        <taxon>Enterobacterales</taxon>
        <taxon>Enterobacteriaceae</taxon>
        <taxon>Escherichia</taxon>
    </lineage>
</organism>
<keyword id="KW-0998">Cell outer membrane</keyword>
<keyword id="KW-0406">Ion transport</keyword>
<keyword id="KW-0472">Membrane</keyword>
<keyword id="KW-0626">Porin</keyword>
<keyword id="KW-1185">Reference proteome</keyword>
<keyword id="KW-0732">Signal</keyword>
<keyword id="KW-0812">Transmembrane</keyword>
<keyword id="KW-1134">Transmembrane beta strand</keyword>
<keyword id="KW-0813">Transport</keyword>
<accession>Q8XE41</accession>